<evidence type="ECO:0000250" key="1">
    <source>
        <dbReference type="UniProtKB" id="P25628"/>
    </source>
</evidence>
<evidence type="ECO:0000250" key="2">
    <source>
        <dbReference type="UniProtKB" id="P35610"/>
    </source>
</evidence>
<evidence type="ECO:0000255" key="3"/>
<evidence type="ECO:0000256" key="4">
    <source>
        <dbReference type="SAM" id="MobiDB-lite"/>
    </source>
</evidence>
<evidence type="ECO:0000305" key="5"/>
<accession>Q876L3</accession>
<proteinExistence type="inferred from homology"/>
<feature type="chain" id="PRO_0000207647" description="Sterol O-acyltransferase 1">
    <location>
        <begin position="1"/>
        <end position="623"/>
    </location>
</feature>
<feature type="transmembrane region" description="Helical" evidence="3">
    <location>
        <begin position="195"/>
        <end position="215"/>
    </location>
</feature>
<feature type="transmembrane region" description="Helical" evidence="3">
    <location>
        <begin position="242"/>
        <end position="262"/>
    </location>
</feature>
<feature type="transmembrane region" description="Helical" evidence="3">
    <location>
        <begin position="277"/>
        <end position="297"/>
    </location>
</feature>
<feature type="transmembrane region" description="Helical" evidence="3">
    <location>
        <begin position="384"/>
        <end position="404"/>
    </location>
</feature>
<feature type="transmembrane region" description="Helical" evidence="3">
    <location>
        <begin position="422"/>
        <end position="442"/>
    </location>
</feature>
<feature type="transmembrane region" description="Helical" evidence="3">
    <location>
        <begin position="548"/>
        <end position="568"/>
    </location>
</feature>
<feature type="transmembrane region" description="Helical" evidence="3">
    <location>
        <begin position="603"/>
        <end position="623"/>
    </location>
</feature>
<feature type="region of interest" description="Disordered" evidence="4">
    <location>
        <begin position="20"/>
        <end position="99"/>
    </location>
</feature>
<feature type="short sequence motif" description="FYXDWWN motif" evidence="2">
    <location>
        <begin position="504"/>
        <end position="510"/>
    </location>
</feature>
<feature type="compositionally biased region" description="Low complexity" evidence="4">
    <location>
        <begin position="57"/>
        <end position="72"/>
    </location>
</feature>
<feature type="compositionally biased region" description="Acidic residues" evidence="4">
    <location>
        <begin position="83"/>
        <end position="92"/>
    </location>
</feature>
<feature type="active site" evidence="2">
    <location>
        <position position="560"/>
    </location>
</feature>
<keyword id="KW-0012">Acyltransferase</keyword>
<keyword id="KW-0256">Endoplasmic reticulum</keyword>
<keyword id="KW-0472">Membrane</keyword>
<keyword id="KW-0808">Transferase</keyword>
<keyword id="KW-0812">Transmembrane</keyword>
<keyword id="KW-1133">Transmembrane helix</keyword>
<protein>
    <recommendedName>
        <fullName>Sterol O-acyltransferase 1</fullName>
        <ecNumber>2.3.1.-</ecNumber>
    </recommendedName>
    <alternativeName>
        <fullName>Sterol-ester synthase 1</fullName>
    </alternativeName>
</protein>
<name>ARE1_SACU7</name>
<gene>
    <name type="primary">ARE1</name>
</gene>
<organism>
    <name type="scientific">Saccharomyces uvarum (strain ATCC 76518 / CBS 7001 / CLIB 283 / NBRC 10550 / MCYC 623 / NCYC 2669 / NRRL Y-11845)</name>
    <name type="common">Yeast</name>
    <name type="synonym">Saccharomyces bayanus var. uvarum</name>
    <dbReference type="NCBI Taxonomy" id="659244"/>
    <lineage>
        <taxon>Eukaryota</taxon>
        <taxon>Fungi</taxon>
        <taxon>Dikarya</taxon>
        <taxon>Ascomycota</taxon>
        <taxon>Saccharomycotina</taxon>
        <taxon>Saccharomycetes</taxon>
        <taxon>Saccharomycetales</taxon>
        <taxon>Saccharomycetaceae</taxon>
        <taxon>Saccharomyces</taxon>
    </lineage>
</organism>
<sequence length="623" mass="71794">MTEAKELLQDERFLKIQELNSAEPSKRHSVTYDNVILPQESVEVSPRSSTTSLEEPATTTATGVAVAAAAAAAEKKKKKKGEDGDDEQDEQAEEKYPVDPRMQKYLSHLKSKSRTRVHRKDASKYVSFFGDVSFDPRPTLLDSAVNVPFQTTFKGPVLEKQLKGLQQTKKGEVAAAAATAATAATAAAAPPGKKLESNFSGIYVFAWMFMGWIAFRSCMDYYVSHEGGFASMEIVQYMTSDLFTIALLDLALFLSTFFVVFVHWLVKLGFIRWKWTGFVAVSLFELCFIPVSFPVYVYYFHFSWVTRIFLFLHSVVLLMKAHSFAFYNGYLWDIKNELEFSSNKLNKFKESLSPETKDILQKSCDFCLFELNYQTKDNDFPNNISCSNYFMFCMFPVLVYQINYPRTSHIRWRYVLEKFCAIMGTIFLMMVTAQIFMHPVAMRCIEYHDTPSFGGWVPAVKQWLFLLFEMIPGFSVLYMLTFYMIWDALLNCVAELTRFADRYFYGDWWNCVSFEEFSRIWNVPVHKFLLRHVYHSSMGALHFSKAQATLFTFLLSAVFHEIAMFAIFKEVRGYLFLFQLSQFAWTALSNTKFLRSRPQLSNVVFTFGVCTGPSMIMTLYLTL</sequence>
<comment type="function">
    <text evidence="1">Sterol O-acyltransferase that catalyzes the formation of stery esters.</text>
</comment>
<comment type="subcellular location">
    <subcellularLocation>
        <location evidence="1">Endoplasmic reticulum membrane</location>
        <topology evidence="3">Multi-pass membrane protein</topology>
    </subcellularLocation>
</comment>
<comment type="similarity">
    <text evidence="5">Belongs to the membrane-bound acyltransferase family. Sterol o-acyltransferase subfamily.</text>
</comment>
<reference key="1">
    <citation type="journal article" date="2003" name="Nature">
        <title>Yeast genome duplication was followed by asynchronous differentiation of duplicated genes.</title>
        <authorList>
            <person name="Langkjaer R.B."/>
            <person name="Cliften P.F."/>
            <person name="Johnston M."/>
            <person name="Piskur J."/>
        </authorList>
    </citation>
    <scope>NUCLEOTIDE SEQUENCE [GENOMIC DNA]</scope>
    <source>
        <strain>623-6C / CBS 9787 / CLIB 533</strain>
    </source>
</reference>
<dbReference type="EC" id="2.3.1.-"/>
<dbReference type="EMBL" id="AY144798">
    <property type="protein sequence ID" value="AAO32362.1"/>
    <property type="molecule type" value="Genomic_DNA"/>
</dbReference>
<dbReference type="SMR" id="Q876L3"/>
<dbReference type="GO" id="GO:0005789">
    <property type="term" value="C:endoplasmic reticulum membrane"/>
    <property type="evidence" value="ECO:0007669"/>
    <property type="project" value="UniProtKB-SubCell"/>
</dbReference>
<dbReference type="GO" id="GO:0034737">
    <property type="term" value="F:ergosterol O-acyltransferase activity"/>
    <property type="evidence" value="ECO:0007669"/>
    <property type="project" value="TreeGrafter"/>
</dbReference>
<dbReference type="GO" id="GO:0008204">
    <property type="term" value="P:ergosterol metabolic process"/>
    <property type="evidence" value="ECO:0007669"/>
    <property type="project" value="TreeGrafter"/>
</dbReference>
<dbReference type="InterPro" id="IPR004299">
    <property type="entry name" value="MBOAT_fam"/>
</dbReference>
<dbReference type="InterPro" id="IPR014371">
    <property type="entry name" value="Oat_ACAT_DAG_ARE"/>
</dbReference>
<dbReference type="PANTHER" id="PTHR10408">
    <property type="entry name" value="STEROL O-ACYLTRANSFERASE"/>
    <property type="match status" value="1"/>
</dbReference>
<dbReference type="PANTHER" id="PTHR10408:SF23">
    <property type="entry name" value="STEROL O-ACYLTRANSFERASE 1-RELATED"/>
    <property type="match status" value="1"/>
</dbReference>
<dbReference type="Pfam" id="PF03062">
    <property type="entry name" value="MBOAT"/>
    <property type="match status" value="1"/>
</dbReference>
<dbReference type="PIRSF" id="PIRSF000439">
    <property type="entry name" value="Oat_ACAT_DAG_ARE"/>
    <property type="match status" value="1"/>
</dbReference>